<keyword id="KW-0143">Chaperone</keyword>
<keyword id="KW-0963">Cytoplasm</keyword>
<keyword id="KW-0235">DNA replication</keyword>
<keyword id="KW-0479">Metal-binding</keyword>
<keyword id="KW-1185">Reference proteome</keyword>
<keyword id="KW-0677">Repeat</keyword>
<keyword id="KW-0346">Stress response</keyword>
<keyword id="KW-0862">Zinc</keyword>
<keyword id="KW-0863">Zinc-finger</keyword>
<protein>
    <recommendedName>
        <fullName evidence="1">Chaperone protein DnaJ</fullName>
    </recommendedName>
</protein>
<evidence type="ECO:0000255" key="1">
    <source>
        <dbReference type="HAMAP-Rule" id="MF_01152"/>
    </source>
</evidence>
<feature type="chain" id="PRO_0000070738" description="Chaperone protein DnaJ">
    <location>
        <begin position="1"/>
        <end position="385"/>
    </location>
</feature>
<feature type="domain" description="J" evidence="1">
    <location>
        <begin position="5"/>
        <end position="70"/>
    </location>
</feature>
<feature type="repeat" description="CXXCXGXG motif">
    <location>
        <begin position="158"/>
        <end position="165"/>
    </location>
</feature>
<feature type="repeat" description="CXXCXGXG motif">
    <location>
        <begin position="175"/>
        <end position="182"/>
    </location>
</feature>
<feature type="repeat" description="CXXCXGXG motif">
    <location>
        <begin position="197"/>
        <end position="204"/>
    </location>
</feature>
<feature type="repeat" description="CXXCXGXG motif">
    <location>
        <begin position="211"/>
        <end position="218"/>
    </location>
</feature>
<feature type="zinc finger region" description="CR-type" evidence="1">
    <location>
        <begin position="145"/>
        <end position="223"/>
    </location>
</feature>
<feature type="binding site" evidence="1">
    <location>
        <position position="158"/>
    </location>
    <ligand>
        <name>Zn(2+)</name>
        <dbReference type="ChEBI" id="CHEBI:29105"/>
        <label>1</label>
    </ligand>
</feature>
<feature type="binding site" evidence="1">
    <location>
        <position position="161"/>
    </location>
    <ligand>
        <name>Zn(2+)</name>
        <dbReference type="ChEBI" id="CHEBI:29105"/>
        <label>1</label>
    </ligand>
</feature>
<feature type="binding site" evidence="1">
    <location>
        <position position="175"/>
    </location>
    <ligand>
        <name>Zn(2+)</name>
        <dbReference type="ChEBI" id="CHEBI:29105"/>
        <label>2</label>
    </ligand>
</feature>
<feature type="binding site" evidence="1">
    <location>
        <position position="178"/>
    </location>
    <ligand>
        <name>Zn(2+)</name>
        <dbReference type="ChEBI" id="CHEBI:29105"/>
        <label>2</label>
    </ligand>
</feature>
<feature type="binding site" evidence="1">
    <location>
        <position position="197"/>
    </location>
    <ligand>
        <name>Zn(2+)</name>
        <dbReference type="ChEBI" id="CHEBI:29105"/>
        <label>2</label>
    </ligand>
</feature>
<feature type="binding site" evidence="1">
    <location>
        <position position="200"/>
    </location>
    <ligand>
        <name>Zn(2+)</name>
        <dbReference type="ChEBI" id="CHEBI:29105"/>
        <label>2</label>
    </ligand>
</feature>
<feature type="binding site" evidence="1">
    <location>
        <position position="211"/>
    </location>
    <ligand>
        <name>Zn(2+)</name>
        <dbReference type="ChEBI" id="CHEBI:29105"/>
        <label>1</label>
    </ligand>
</feature>
<feature type="binding site" evidence="1">
    <location>
        <position position="214"/>
    </location>
    <ligand>
        <name>Zn(2+)</name>
        <dbReference type="ChEBI" id="CHEBI:29105"/>
        <label>1</label>
    </ligand>
</feature>
<organism>
    <name type="scientific">Bordetella pertussis (strain Tohama I / ATCC BAA-589 / NCTC 13251)</name>
    <dbReference type="NCBI Taxonomy" id="257313"/>
    <lineage>
        <taxon>Bacteria</taxon>
        <taxon>Pseudomonadati</taxon>
        <taxon>Pseudomonadota</taxon>
        <taxon>Betaproteobacteria</taxon>
        <taxon>Burkholderiales</taxon>
        <taxon>Alcaligenaceae</taxon>
        <taxon>Bordetella</taxon>
    </lineage>
</organism>
<gene>
    <name evidence="1" type="primary">dnaJ</name>
    <name type="ordered locus">BP2498</name>
</gene>
<name>DNAJ_BORPE</name>
<proteinExistence type="inferred from homology"/>
<dbReference type="EMBL" id="BX640418">
    <property type="protein sequence ID" value="CAE42770.1"/>
    <property type="molecule type" value="Genomic_DNA"/>
</dbReference>
<dbReference type="RefSeq" id="NP_881125.1">
    <property type="nucleotide sequence ID" value="NC_002929.2"/>
</dbReference>
<dbReference type="RefSeq" id="WP_010930958.1">
    <property type="nucleotide sequence ID" value="NC_002929.2"/>
</dbReference>
<dbReference type="SMR" id="Q7VVY3"/>
<dbReference type="STRING" id="257313.BP2498"/>
<dbReference type="PaxDb" id="257313-BP2498"/>
<dbReference type="KEGG" id="bpe:BP2498"/>
<dbReference type="PATRIC" id="fig|257313.5.peg.2696"/>
<dbReference type="eggNOG" id="COG0484">
    <property type="taxonomic scope" value="Bacteria"/>
</dbReference>
<dbReference type="HOGENOM" id="CLU_017633_0_7_4"/>
<dbReference type="Proteomes" id="UP000002676">
    <property type="component" value="Chromosome"/>
</dbReference>
<dbReference type="GO" id="GO:0005737">
    <property type="term" value="C:cytoplasm"/>
    <property type="evidence" value="ECO:0007669"/>
    <property type="project" value="UniProtKB-SubCell"/>
</dbReference>
<dbReference type="GO" id="GO:0005524">
    <property type="term" value="F:ATP binding"/>
    <property type="evidence" value="ECO:0007669"/>
    <property type="project" value="InterPro"/>
</dbReference>
<dbReference type="GO" id="GO:0031072">
    <property type="term" value="F:heat shock protein binding"/>
    <property type="evidence" value="ECO:0007669"/>
    <property type="project" value="InterPro"/>
</dbReference>
<dbReference type="GO" id="GO:0051082">
    <property type="term" value="F:unfolded protein binding"/>
    <property type="evidence" value="ECO:0007669"/>
    <property type="project" value="UniProtKB-UniRule"/>
</dbReference>
<dbReference type="GO" id="GO:0008270">
    <property type="term" value="F:zinc ion binding"/>
    <property type="evidence" value="ECO:0007669"/>
    <property type="project" value="UniProtKB-UniRule"/>
</dbReference>
<dbReference type="GO" id="GO:0051085">
    <property type="term" value="P:chaperone cofactor-dependent protein refolding"/>
    <property type="evidence" value="ECO:0007669"/>
    <property type="project" value="TreeGrafter"/>
</dbReference>
<dbReference type="GO" id="GO:0006260">
    <property type="term" value="P:DNA replication"/>
    <property type="evidence" value="ECO:0007669"/>
    <property type="project" value="UniProtKB-KW"/>
</dbReference>
<dbReference type="GO" id="GO:0042026">
    <property type="term" value="P:protein refolding"/>
    <property type="evidence" value="ECO:0007669"/>
    <property type="project" value="TreeGrafter"/>
</dbReference>
<dbReference type="GO" id="GO:0009408">
    <property type="term" value="P:response to heat"/>
    <property type="evidence" value="ECO:0007669"/>
    <property type="project" value="InterPro"/>
</dbReference>
<dbReference type="CDD" id="cd06257">
    <property type="entry name" value="DnaJ"/>
    <property type="match status" value="1"/>
</dbReference>
<dbReference type="CDD" id="cd10747">
    <property type="entry name" value="DnaJ_C"/>
    <property type="match status" value="1"/>
</dbReference>
<dbReference type="CDD" id="cd10719">
    <property type="entry name" value="DnaJ_zf"/>
    <property type="match status" value="1"/>
</dbReference>
<dbReference type="FunFam" id="1.10.287.110:FF:000034">
    <property type="entry name" value="Chaperone protein DnaJ"/>
    <property type="match status" value="1"/>
</dbReference>
<dbReference type="FunFam" id="2.10.230.10:FF:000002">
    <property type="entry name" value="Molecular chaperone DnaJ"/>
    <property type="match status" value="1"/>
</dbReference>
<dbReference type="FunFam" id="2.60.260.20:FF:000004">
    <property type="entry name" value="Molecular chaperone DnaJ"/>
    <property type="match status" value="1"/>
</dbReference>
<dbReference type="Gene3D" id="1.10.287.110">
    <property type="entry name" value="DnaJ domain"/>
    <property type="match status" value="1"/>
</dbReference>
<dbReference type="Gene3D" id="2.10.230.10">
    <property type="entry name" value="Heat shock protein DnaJ, cysteine-rich domain"/>
    <property type="match status" value="1"/>
</dbReference>
<dbReference type="Gene3D" id="2.60.260.20">
    <property type="entry name" value="Urease metallochaperone UreE, N-terminal domain"/>
    <property type="match status" value="2"/>
</dbReference>
<dbReference type="HAMAP" id="MF_01152">
    <property type="entry name" value="DnaJ"/>
    <property type="match status" value="1"/>
</dbReference>
<dbReference type="InterPro" id="IPR012724">
    <property type="entry name" value="DnaJ"/>
</dbReference>
<dbReference type="InterPro" id="IPR002939">
    <property type="entry name" value="DnaJ_C"/>
</dbReference>
<dbReference type="InterPro" id="IPR001623">
    <property type="entry name" value="DnaJ_domain"/>
</dbReference>
<dbReference type="InterPro" id="IPR018253">
    <property type="entry name" value="DnaJ_domain_CS"/>
</dbReference>
<dbReference type="InterPro" id="IPR008971">
    <property type="entry name" value="HSP40/DnaJ_pept-bd"/>
</dbReference>
<dbReference type="InterPro" id="IPR001305">
    <property type="entry name" value="HSP_DnaJ_Cys-rich_dom"/>
</dbReference>
<dbReference type="InterPro" id="IPR036410">
    <property type="entry name" value="HSP_DnaJ_Cys-rich_dom_sf"/>
</dbReference>
<dbReference type="InterPro" id="IPR036869">
    <property type="entry name" value="J_dom_sf"/>
</dbReference>
<dbReference type="NCBIfam" id="TIGR02349">
    <property type="entry name" value="DnaJ_bact"/>
    <property type="match status" value="1"/>
</dbReference>
<dbReference type="NCBIfam" id="NF008035">
    <property type="entry name" value="PRK10767.1"/>
    <property type="match status" value="1"/>
</dbReference>
<dbReference type="PANTHER" id="PTHR43096:SF48">
    <property type="entry name" value="CHAPERONE PROTEIN DNAJ"/>
    <property type="match status" value="1"/>
</dbReference>
<dbReference type="PANTHER" id="PTHR43096">
    <property type="entry name" value="DNAJ HOMOLOG 1, MITOCHONDRIAL-RELATED"/>
    <property type="match status" value="1"/>
</dbReference>
<dbReference type="Pfam" id="PF00226">
    <property type="entry name" value="DnaJ"/>
    <property type="match status" value="1"/>
</dbReference>
<dbReference type="Pfam" id="PF01556">
    <property type="entry name" value="DnaJ_C"/>
    <property type="match status" value="1"/>
</dbReference>
<dbReference type="Pfam" id="PF00684">
    <property type="entry name" value="DnaJ_CXXCXGXG"/>
    <property type="match status" value="1"/>
</dbReference>
<dbReference type="PRINTS" id="PR00625">
    <property type="entry name" value="JDOMAIN"/>
</dbReference>
<dbReference type="SMART" id="SM00271">
    <property type="entry name" value="DnaJ"/>
    <property type="match status" value="1"/>
</dbReference>
<dbReference type="SUPFAM" id="SSF46565">
    <property type="entry name" value="Chaperone J-domain"/>
    <property type="match status" value="1"/>
</dbReference>
<dbReference type="SUPFAM" id="SSF57938">
    <property type="entry name" value="DnaJ/Hsp40 cysteine-rich domain"/>
    <property type="match status" value="1"/>
</dbReference>
<dbReference type="SUPFAM" id="SSF49493">
    <property type="entry name" value="HSP40/DnaJ peptide-binding domain"/>
    <property type="match status" value="2"/>
</dbReference>
<dbReference type="PROSITE" id="PS00636">
    <property type="entry name" value="DNAJ_1"/>
    <property type="match status" value="1"/>
</dbReference>
<dbReference type="PROSITE" id="PS50076">
    <property type="entry name" value="DNAJ_2"/>
    <property type="match status" value="1"/>
</dbReference>
<dbReference type="PROSITE" id="PS51188">
    <property type="entry name" value="ZF_CR"/>
    <property type="match status" value="1"/>
</dbReference>
<sequence>MAKRDYYEVLGVAKNASDEDLKKAYRKLAMKYHPDRNPDSKEAEEKFKEAKEAYEVLGDEQKRAAYDRYGHAGVDPNAAGMGGGMGGGMGGGMGGGMGGGFADAFGDIFGEIFGAGRRGGGGPQVYRGADLKYALEITLEQAASGFDTEIRVPSWENCDTCHGSGAKAGTSPKTCRTCGGSGAVRMQQGFFSVQQTCPTCHGTGKEITDPCPSCDGVGRTRRNKTLQVKIPAGIDDGMRIRSSGNGEPGINGGPPGDLYVEIHIKQHKIFQRDGDDLHCELTIPFTTAALGGELQVPTLGGKAEISIPEGTQSGKTFRLRAKGIRGVRGSYPGDLYCHVVVETPVRLSDEQKAILRQFEASLNDGGDRHSPQSKSWTDRVKEFFS</sequence>
<reference key="1">
    <citation type="journal article" date="2003" name="Nat. Genet.">
        <title>Comparative analysis of the genome sequences of Bordetella pertussis, Bordetella parapertussis and Bordetella bronchiseptica.</title>
        <authorList>
            <person name="Parkhill J."/>
            <person name="Sebaihia M."/>
            <person name="Preston A."/>
            <person name="Murphy L.D."/>
            <person name="Thomson N.R."/>
            <person name="Harris D.E."/>
            <person name="Holden M.T.G."/>
            <person name="Churcher C.M."/>
            <person name="Bentley S.D."/>
            <person name="Mungall K.L."/>
            <person name="Cerdeno-Tarraga A.-M."/>
            <person name="Temple L."/>
            <person name="James K.D."/>
            <person name="Harris B."/>
            <person name="Quail M.A."/>
            <person name="Achtman M."/>
            <person name="Atkin R."/>
            <person name="Baker S."/>
            <person name="Basham D."/>
            <person name="Bason N."/>
            <person name="Cherevach I."/>
            <person name="Chillingworth T."/>
            <person name="Collins M."/>
            <person name="Cronin A."/>
            <person name="Davis P."/>
            <person name="Doggett J."/>
            <person name="Feltwell T."/>
            <person name="Goble A."/>
            <person name="Hamlin N."/>
            <person name="Hauser H."/>
            <person name="Holroyd S."/>
            <person name="Jagels K."/>
            <person name="Leather S."/>
            <person name="Moule S."/>
            <person name="Norberczak H."/>
            <person name="O'Neil S."/>
            <person name="Ormond D."/>
            <person name="Price C."/>
            <person name="Rabbinowitsch E."/>
            <person name="Rutter S."/>
            <person name="Sanders M."/>
            <person name="Saunders D."/>
            <person name="Seeger K."/>
            <person name="Sharp S."/>
            <person name="Simmonds M."/>
            <person name="Skelton J."/>
            <person name="Squares R."/>
            <person name="Squares S."/>
            <person name="Stevens K."/>
            <person name="Unwin L."/>
            <person name="Whitehead S."/>
            <person name="Barrell B.G."/>
            <person name="Maskell D.J."/>
        </authorList>
    </citation>
    <scope>NUCLEOTIDE SEQUENCE [LARGE SCALE GENOMIC DNA]</scope>
    <source>
        <strain>Tohama I / ATCC BAA-589 / NCTC 13251</strain>
    </source>
</reference>
<accession>Q7VVY3</accession>
<comment type="function">
    <text evidence="1">Participates actively in the response to hyperosmotic and heat shock by preventing the aggregation of stress-denatured proteins and by disaggregating proteins, also in an autonomous, DnaK-independent fashion. Unfolded proteins bind initially to DnaJ; upon interaction with the DnaJ-bound protein, DnaK hydrolyzes its bound ATP, resulting in the formation of a stable complex. GrpE releases ADP from DnaK; ATP binding to DnaK triggers the release of the substrate protein, thus completing the reaction cycle. Several rounds of ATP-dependent interactions between DnaJ, DnaK and GrpE are required for fully efficient folding. Also involved, together with DnaK and GrpE, in the DNA replication of plasmids through activation of initiation proteins.</text>
</comment>
<comment type="cofactor">
    <cofactor evidence="1">
        <name>Zn(2+)</name>
        <dbReference type="ChEBI" id="CHEBI:29105"/>
    </cofactor>
    <text evidence="1">Binds 2 Zn(2+) ions per monomer.</text>
</comment>
<comment type="subunit">
    <text evidence="1">Homodimer.</text>
</comment>
<comment type="subcellular location">
    <subcellularLocation>
        <location evidence="1">Cytoplasm</location>
    </subcellularLocation>
</comment>
<comment type="domain">
    <text evidence="1">The J domain is necessary and sufficient to stimulate DnaK ATPase activity. Zinc center 1 plays an important role in the autonomous, DnaK-independent chaperone activity of DnaJ. Zinc center 2 is essential for interaction with DnaK and for DnaJ activity.</text>
</comment>
<comment type="similarity">
    <text evidence="1">Belongs to the DnaJ family.</text>
</comment>